<keyword id="KW-0032">Aminotransferase</keyword>
<keyword id="KW-1185">Reference proteome</keyword>
<keyword id="KW-0808">Transferase</keyword>
<gene>
    <name evidence="1" type="primary">gcvT</name>
    <name type="ordered locus">LA_0362</name>
</gene>
<name>GCST_LEPIN</name>
<reference key="1">
    <citation type="journal article" date="2003" name="Nature">
        <title>Unique physiological and pathogenic features of Leptospira interrogans revealed by whole-genome sequencing.</title>
        <authorList>
            <person name="Ren S.-X."/>
            <person name="Fu G."/>
            <person name="Jiang X.-G."/>
            <person name="Zeng R."/>
            <person name="Miao Y.-G."/>
            <person name="Xu H."/>
            <person name="Zhang Y.-X."/>
            <person name="Xiong H."/>
            <person name="Lu G."/>
            <person name="Lu L.-F."/>
            <person name="Jiang H.-Q."/>
            <person name="Jia J."/>
            <person name="Tu Y.-F."/>
            <person name="Jiang J.-X."/>
            <person name="Gu W.-Y."/>
            <person name="Zhang Y.-Q."/>
            <person name="Cai Z."/>
            <person name="Sheng H.-H."/>
            <person name="Yin H.-F."/>
            <person name="Zhang Y."/>
            <person name="Zhu G.-F."/>
            <person name="Wan M."/>
            <person name="Huang H.-L."/>
            <person name="Qian Z."/>
            <person name="Wang S.-Y."/>
            <person name="Ma W."/>
            <person name="Yao Z.-J."/>
            <person name="Shen Y."/>
            <person name="Qiang B.-Q."/>
            <person name="Xia Q.-C."/>
            <person name="Guo X.-K."/>
            <person name="Danchin A."/>
            <person name="Saint Girons I."/>
            <person name="Somerville R.L."/>
            <person name="Wen Y.-M."/>
            <person name="Shi M.-H."/>
            <person name="Chen Z."/>
            <person name="Xu J.-G."/>
            <person name="Zhao G.-P."/>
        </authorList>
    </citation>
    <scope>NUCLEOTIDE SEQUENCE [LARGE SCALE GENOMIC DNA]</scope>
    <source>
        <strain>56601</strain>
    </source>
</reference>
<evidence type="ECO:0000255" key="1">
    <source>
        <dbReference type="HAMAP-Rule" id="MF_00259"/>
    </source>
</evidence>
<evidence type="ECO:0000305" key="2"/>
<dbReference type="EC" id="2.1.2.10" evidence="1"/>
<dbReference type="EMBL" id="AE010300">
    <property type="protein sequence ID" value="AAN47561.2"/>
    <property type="status" value="ALT_INIT"/>
    <property type="molecule type" value="Genomic_DNA"/>
</dbReference>
<dbReference type="RefSeq" id="NP_710543.3">
    <property type="nucleotide sequence ID" value="NC_004342.2"/>
</dbReference>
<dbReference type="RefSeq" id="WP_001973508.1">
    <property type="nucleotide sequence ID" value="NC_004342.2"/>
</dbReference>
<dbReference type="SMR" id="Q8F935"/>
<dbReference type="FunCoup" id="Q8F935">
    <property type="interactions" value="463"/>
</dbReference>
<dbReference type="STRING" id="189518.LA_0362"/>
<dbReference type="PaxDb" id="189518-LA_0362"/>
<dbReference type="EnsemblBacteria" id="AAN47561">
    <property type="protein sequence ID" value="AAN47561"/>
    <property type="gene ID" value="LA_0362"/>
</dbReference>
<dbReference type="GeneID" id="61143666"/>
<dbReference type="KEGG" id="lil:LA_0362"/>
<dbReference type="PATRIC" id="fig|189518.3.peg.367"/>
<dbReference type="HOGENOM" id="CLU_007884_10_2_12"/>
<dbReference type="InParanoid" id="Q8F935"/>
<dbReference type="OrthoDB" id="9774591at2"/>
<dbReference type="Proteomes" id="UP000001408">
    <property type="component" value="Chromosome I"/>
</dbReference>
<dbReference type="GO" id="GO:0005829">
    <property type="term" value="C:cytosol"/>
    <property type="evidence" value="ECO:0000318"/>
    <property type="project" value="GO_Central"/>
</dbReference>
<dbReference type="GO" id="GO:0005960">
    <property type="term" value="C:glycine cleavage complex"/>
    <property type="evidence" value="ECO:0007669"/>
    <property type="project" value="InterPro"/>
</dbReference>
<dbReference type="GO" id="GO:0004047">
    <property type="term" value="F:aminomethyltransferase activity"/>
    <property type="evidence" value="ECO:0007669"/>
    <property type="project" value="UniProtKB-UniRule"/>
</dbReference>
<dbReference type="GO" id="GO:0008483">
    <property type="term" value="F:transaminase activity"/>
    <property type="evidence" value="ECO:0007669"/>
    <property type="project" value="UniProtKB-KW"/>
</dbReference>
<dbReference type="GO" id="GO:0019464">
    <property type="term" value="P:glycine decarboxylation via glycine cleavage system"/>
    <property type="evidence" value="ECO:0007669"/>
    <property type="project" value="UniProtKB-UniRule"/>
</dbReference>
<dbReference type="FunFam" id="2.40.30.110:FF:000011">
    <property type="entry name" value="Aminomethyltransferase"/>
    <property type="match status" value="1"/>
</dbReference>
<dbReference type="FunFam" id="4.10.1250.10:FF:000003">
    <property type="entry name" value="Aminomethyltransferase"/>
    <property type="match status" value="1"/>
</dbReference>
<dbReference type="Gene3D" id="2.40.30.110">
    <property type="entry name" value="Aminomethyltransferase beta-barrel domains"/>
    <property type="match status" value="1"/>
</dbReference>
<dbReference type="Gene3D" id="3.30.70.1400">
    <property type="entry name" value="Aminomethyltransferase beta-barrel domains"/>
    <property type="match status" value="1"/>
</dbReference>
<dbReference type="Gene3D" id="4.10.1250.10">
    <property type="entry name" value="Aminomethyltransferase fragment"/>
    <property type="match status" value="1"/>
</dbReference>
<dbReference type="Gene3D" id="3.30.1360.120">
    <property type="entry name" value="Probable tRNA modification gtpase trme, domain 1"/>
    <property type="match status" value="1"/>
</dbReference>
<dbReference type="HAMAP" id="MF_00259">
    <property type="entry name" value="GcvT"/>
    <property type="match status" value="1"/>
</dbReference>
<dbReference type="InterPro" id="IPR006223">
    <property type="entry name" value="GCS_T"/>
</dbReference>
<dbReference type="InterPro" id="IPR022903">
    <property type="entry name" value="GCS_T_bac"/>
</dbReference>
<dbReference type="InterPro" id="IPR013977">
    <property type="entry name" value="GCST_C"/>
</dbReference>
<dbReference type="InterPro" id="IPR006222">
    <property type="entry name" value="GCV_T_N"/>
</dbReference>
<dbReference type="InterPro" id="IPR028896">
    <property type="entry name" value="GcvT/YgfZ/DmdA"/>
</dbReference>
<dbReference type="InterPro" id="IPR029043">
    <property type="entry name" value="GcvT/YgfZ_C"/>
</dbReference>
<dbReference type="InterPro" id="IPR027266">
    <property type="entry name" value="TrmE/GcvT_dom1"/>
</dbReference>
<dbReference type="NCBIfam" id="TIGR00528">
    <property type="entry name" value="gcvT"/>
    <property type="match status" value="1"/>
</dbReference>
<dbReference type="NCBIfam" id="NF001567">
    <property type="entry name" value="PRK00389.1"/>
    <property type="match status" value="1"/>
</dbReference>
<dbReference type="PANTHER" id="PTHR43757">
    <property type="entry name" value="AMINOMETHYLTRANSFERASE"/>
    <property type="match status" value="1"/>
</dbReference>
<dbReference type="PANTHER" id="PTHR43757:SF2">
    <property type="entry name" value="AMINOMETHYLTRANSFERASE, MITOCHONDRIAL"/>
    <property type="match status" value="1"/>
</dbReference>
<dbReference type="Pfam" id="PF01571">
    <property type="entry name" value="GCV_T"/>
    <property type="match status" value="1"/>
</dbReference>
<dbReference type="Pfam" id="PF08669">
    <property type="entry name" value="GCV_T_C"/>
    <property type="match status" value="1"/>
</dbReference>
<dbReference type="PIRSF" id="PIRSF006487">
    <property type="entry name" value="GcvT"/>
    <property type="match status" value="1"/>
</dbReference>
<dbReference type="SUPFAM" id="SSF101790">
    <property type="entry name" value="Aminomethyltransferase beta-barrel domain"/>
    <property type="match status" value="1"/>
</dbReference>
<dbReference type="SUPFAM" id="SSF103025">
    <property type="entry name" value="Folate-binding domain"/>
    <property type="match status" value="1"/>
</dbReference>
<accession>Q8F935</accession>
<sequence length="371" mass="41583">MSQDKKTPLYETHRTLGAKMIPFGGWDMPVQYSGIIAEHNATREAAGLFDVSHMGEIFITGNPKSILLFLESITCNSVASLSDFQVQYNAILNQNGGLVDDVTIYKFSSEKYMICSNASNYEAVTEHLLEHLPISGVKVDNQSLQWHQIALQGPKANEIFSKFLKRDLDSIQYYRFMLLPYQGEEIIVSRTGYTGEDGFEIYSSIPIGLKLWNELLEFGKPYGLLPCGLGARDTLRIEAKYPLYGHELNDQWTPIESGIGWIVKEKENPYFSSEKILFQKKNGVPSKIVSFALTEAGVPRENFRVLDSQGNEIGKTTSGTFSPSLKKGIGLALIQSEKIKDGEPIQIEIREQPKQAIITMKPFIPGSIRKN</sequence>
<feature type="chain" id="PRO_0000122566" description="Aminomethyltransferase">
    <location>
        <begin position="1"/>
        <end position="371"/>
    </location>
</feature>
<comment type="function">
    <text evidence="1">The glycine cleavage system catalyzes the degradation of glycine.</text>
</comment>
<comment type="catalytic activity">
    <reaction evidence="1">
        <text>N(6)-[(R)-S(8)-aminomethyldihydrolipoyl]-L-lysyl-[protein] + (6S)-5,6,7,8-tetrahydrofolate = N(6)-[(R)-dihydrolipoyl]-L-lysyl-[protein] + (6R)-5,10-methylene-5,6,7,8-tetrahydrofolate + NH4(+)</text>
        <dbReference type="Rhea" id="RHEA:16945"/>
        <dbReference type="Rhea" id="RHEA-COMP:10475"/>
        <dbReference type="Rhea" id="RHEA-COMP:10492"/>
        <dbReference type="ChEBI" id="CHEBI:15636"/>
        <dbReference type="ChEBI" id="CHEBI:28938"/>
        <dbReference type="ChEBI" id="CHEBI:57453"/>
        <dbReference type="ChEBI" id="CHEBI:83100"/>
        <dbReference type="ChEBI" id="CHEBI:83143"/>
        <dbReference type="EC" id="2.1.2.10"/>
    </reaction>
</comment>
<comment type="subunit">
    <text evidence="1">The glycine cleavage system is composed of four proteins: P, T, L and H.</text>
</comment>
<comment type="similarity">
    <text evidence="1">Belongs to the GcvT family.</text>
</comment>
<comment type="sequence caution" evidence="2">
    <conflict type="erroneous initiation">
        <sequence resource="EMBL-CDS" id="AAN47561"/>
    </conflict>
    <text>Extended N-terminus.</text>
</comment>
<proteinExistence type="inferred from homology"/>
<protein>
    <recommendedName>
        <fullName evidence="1">Aminomethyltransferase</fullName>
        <ecNumber evidence="1">2.1.2.10</ecNumber>
    </recommendedName>
    <alternativeName>
        <fullName evidence="1">Glycine cleavage system T protein</fullName>
    </alternativeName>
</protein>
<organism>
    <name type="scientific">Leptospira interrogans serogroup Icterohaemorrhagiae serovar Lai (strain 56601)</name>
    <dbReference type="NCBI Taxonomy" id="189518"/>
    <lineage>
        <taxon>Bacteria</taxon>
        <taxon>Pseudomonadati</taxon>
        <taxon>Spirochaetota</taxon>
        <taxon>Spirochaetia</taxon>
        <taxon>Leptospirales</taxon>
        <taxon>Leptospiraceae</taxon>
        <taxon>Leptospira</taxon>
    </lineage>
</organism>